<evidence type="ECO:0000269" key="1">
    <source>
    </source>
</evidence>
<evidence type="ECO:0000303" key="2">
    <source>
    </source>
</evidence>
<evidence type="ECO:0000305" key="3"/>
<evidence type="ECO:0000305" key="4">
    <source>
    </source>
</evidence>
<feature type="peptide" id="PRO_0000422883" description="Conotoxin as25a" evidence="1">
    <location>
        <begin position="1"/>
        <end position="23"/>
    </location>
</feature>
<feature type="modified residue" description="4-hydroxyproline; partial" evidence="1">
    <location>
        <position position="4"/>
    </location>
</feature>
<feature type="modified residue" description="4-hydroxyproline; partial; alternate" evidence="1">
    <location>
        <position position="23"/>
    </location>
</feature>
<feature type="modified residue" description="Proline amide; alternate" evidence="1">
    <location>
        <position position="23"/>
    </location>
</feature>
<proteinExistence type="evidence at protein level"/>
<organism>
    <name type="scientific">Conus cancellatus</name>
    <name type="common">Cancellate cone</name>
    <name type="synonym">Conus austini</name>
    <dbReference type="NCBI Taxonomy" id="289020"/>
    <lineage>
        <taxon>Eukaryota</taxon>
        <taxon>Metazoa</taxon>
        <taxon>Spiralia</taxon>
        <taxon>Lophotrochozoa</taxon>
        <taxon>Mollusca</taxon>
        <taxon>Gastropoda</taxon>
        <taxon>Caenogastropoda</taxon>
        <taxon>Neogastropoda</taxon>
        <taxon>Conoidea</taxon>
        <taxon>Conidae</taxon>
        <taxon>Conus</taxon>
        <taxon>Dauciconus</taxon>
    </lineage>
</organism>
<keyword id="KW-0027">Amidation</keyword>
<keyword id="KW-0903">Direct protein sequencing</keyword>
<keyword id="KW-1015">Disulfide bond</keyword>
<keyword id="KW-0379">Hydroxylation</keyword>
<keyword id="KW-0528">Neurotoxin</keyword>
<keyword id="KW-0964">Secreted</keyword>
<keyword id="KW-0800">Toxin</keyword>
<accession>P0DM45</accession>
<reference key="1">
    <citation type="journal article" date="2013" name="Peptides">
        <title>A novel arrangement of Cys residues in a paralytic peptide of Conus cancellatus (jr. syn.: Conus austini), a worm-hunting snail from the Gulf of Mexico.</title>
        <authorList>
            <person name="Aguilar M.B."/>
            <person name="Zugasti-Cruz A."/>
            <person name="Falcon A."/>
            <person name="Batista C.V."/>
            <person name="Olivera B.M."/>
            <person name="Heimer de la Cotera E.P."/>
        </authorList>
    </citation>
    <scope>PROTEIN SEQUENCE</scope>
    <scope>FUNCTION</scope>
    <scope>BIOASSAY</scope>
    <scope>HYDROXYLATION AT PRO-4 AND PRO-23</scope>
    <scope>AMIDATION AT PRO-23</scope>
    <scope>MASS SPECTROMETRY</scope>
    <scope>SUBCELLULAR LOCATION</scope>
    <source>
        <tissue>Venom</tissue>
    </source>
</reference>
<sequence length="23" mass="2653">CKCPSCNFNDVTENCKCCIFRQP</sequence>
<name>CXPA_CONCF</name>
<protein>
    <recommendedName>
        <fullName evidence="2">Conotoxin as25a</fullName>
    </recommendedName>
    <alternativeName>
        <fullName evidence="2">As25b</fullName>
    </alternativeName>
</protein>
<dbReference type="GO" id="GO:0005576">
    <property type="term" value="C:extracellular region"/>
    <property type="evidence" value="ECO:0007669"/>
    <property type="project" value="UniProtKB-SubCell"/>
</dbReference>
<dbReference type="GO" id="GO:0090729">
    <property type="term" value="F:toxin activity"/>
    <property type="evidence" value="ECO:0007669"/>
    <property type="project" value="UniProtKB-KW"/>
</dbReference>
<comment type="function">
    <text evidence="1">Upon intracranial injection in mice, as25a (the toxin without the two 4-hydroxyprolines) provokes paralysis of the hind limbs and death with a dose of 240 pmol.</text>
</comment>
<comment type="subcellular location">
    <subcellularLocation>
        <location evidence="1">Secreted</location>
    </subcellularLocation>
</comment>
<comment type="tissue specificity">
    <text evidence="4">Expressed by the venom duct.</text>
</comment>
<comment type="domain">
    <text evidence="3">The cysteine framework is XXV (C-C-C-C-CC).</text>
</comment>
<comment type="PTM">
    <text evidence="1">The name as25b given in PubMed:23474143 corresponds to the hydroxylated peptide (PubMed:23474143). The amidation of the C-terminus of this hydroxylated peptide is not directly confirmed (PubMed:23474143).</text>
</comment>
<comment type="PTM">
    <text evidence="1">Contains 3 disulfide bonds.</text>
</comment>
<comment type="mass spectrometry" mass="2644.12" method="MALDI" evidence="1">
    <text>Monoisotopic mass.</text>
</comment>